<keyword id="KW-0249">Electron transport</keyword>
<keyword id="KW-0349">Heme</keyword>
<keyword id="KW-0408">Iron</keyword>
<keyword id="KW-0472">Membrane</keyword>
<keyword id="KW-0479">Metal-binding</keyword>
<keyword id="KW-0496">Mitochondrion</keyword>
<keyword id="KW-0999">Mitochondrion inner membrane</keyword>
<keyword id="KW-0679">Respiratory chain</keyword>
<keyword id="KW-0812">Transmembrane</keyword>
<keyword id="KW-1133">Transmembrane helix</keyword>
<keyword id="KW-0813">Transport</keyword>
<keyword id="KW-0830">Ubiquinone</keyword>
<organism>
    <name type="scientific">Sminthopsis hirtipes</name>
    <name type="common">Hairy-footed dunnart</name>
    <dbReference type="NCBI Taxonomy" id="90760"/>
    <lineage>
        <taxon>Eukaryota</taxon>
        <taxon>Metazoa</taxon>
        <taxon>Chordata</taxon>
        <taxon>Craniata</taxon>
        <taxon>Vertebrata</taxon>
        <taxon>Euteleostomi</taxon>
        <taxon>Mammalia</taxon>
        <taxon>Metatheria</taxon>
        <taxon>Dasyuromorphia</taxon>
        <taxon>Dasyuridae</taxon>
        <taxon>Sminthopsis</taxon>
    </lineage>
</organism>
<name>CYB_SMIHI</name>
<evidence type="ECO:0000250" key="1"/>
<evidence type="ECO:0000250" key="2">
    <source>
        <dbReference type="UniProtKB" id="P00157"/>
    </source>
</evidence>
<evidence type="ECO:0000255" key="3">
    <source>
        <dbReference type="PROSITE-ProRule" id="PRU00967"/>
    </source>
</evidence>
<evidence type="ECO:0000255" key="4">
    <source>
        <dbReference type="PROSITE-ProRule" id="PRU00968"/>
    </source>
</evidence>
<feature type="chain" id="PRO_0000254862" description="Cytochrome b">
    <location>
        <begin position="1"/>
        <end position="381"/>
    </location>
</feature>
<feature type="transmembrane region" description="Helical" evidence="2">
    <location>
        <begin position="33"/>
        <end position="53"/>
    </location>
</feature>
<feature type="transmembrane region" description="Helical" evidence="2">
    <location>
        <begin position="77"/>
        <end position="98"/>
    </location>
</feature>
<feature type="transmembrane region" description="Helical" evidence="2">
    <location>
        <begin position="113"/>
        <end position="133"/>
    </location>
</feature>
<feature type="transmembrane region" description="Helical" evidence="2">
    <location>
        <begin position="178"/>
        <end position="198"/>
    </location>
</feature>
<feature type="transmembrane region" description="Helical" evidence="2">
    <location>
        <begin position="226"/>
        <end position="246"/>
    </location>
</feature>
<feature type="transmembrane region" description="Helical" evidence="2">
    <location>
        <begin position="288"/>
        <end position="308"/>
    </location>
</feature>
<feature type="transmembrane region" description="Helical" evidence="2">
    <location>
        <begin position="320"/>
        <end position="340"/>
    </location>
</feature>
<feature type="transmembrane region" description="Helical" evidence="2">
    <location>
        <begin position="347"/>
        <end position="367"/>
    </location>
</feature>
<feature type="binding site" description="axial binding residue" evidence="2">
    <location>
        <position position="83"/>
    </location>
    <ligand>
        <name>heme b</name>
        <dbReference type="ChEBI" id="CHEBI:60344"/>
        <label>b562</label>
    </ligand>
    <ligandPart>
        <name>Fe</name>
        <dbReference type="ChEBI" id="CHEBI:18248"/>
    </ligandPart>
</feature>
<feature type="binding site" description="axial binding residue" evidence="2">
    <location>
        <position position="97"/>
    </location>
    <ligand>
        <name>heme b</name>
        <dbReference type="ChEBI" id="CHEBI:60344"/>
        <label>b566</label>
    </ligand>
    <ligandPart>
        <name>Fe</name>
        <dbReference type="ChEBI" id="CHEBI:18248"/>
    </ligandPart>
</feature>
<feature type="binding site" description="axial binding residue" evidence="2">
    <location>
        <position position="182"/>
    </location>
    <ligand>
        <name>heme b</name>
        <dbReference type="ChEBI" id="CHEBI:60344"/>
        <label>b562</label>
    </ligand>
    <ligandPart>
        <name>Fe</name>
        <dbReference type="ChEBI" id="CHEBI:18248"/>
    </ligandPart>
</feature>
<feature type="binding site" description="axial binding residue" evidence="2">
    <location>
        <position position="196"/>
    </location>
    <ligand>
        <name>heme b</name>
        <dbReference type="ChEBI" id="CHEBI:60344"/>
        <label>b566</label>
    </ligand>
    <ligandPart>
        <name>Fe</name>
        <dbReference type="ChEBI" id="CHEBI:18248"/>
    </ligandPart>
</feature>
<dbReference type="EMBL" id="AF088927">
    <property type="protein sequence ID" value="AAD38437.1"/>
    <property type="molecule type" value="Genomic_DNA"/>
</dbReference>
<dbReference type="GO" id="GO:0005743">
    <property type="term" value="C:mitochondrial inner membrane"/>
    <property type="evidence" value="ECO:0007669"/>
    <property type="project" value="UniProtKB-SubCell"/>
</dbReference>
<dbReference type="GO" id="GO:0045275">
    <property type="term" value="C:respiratory chain complex III"/>
    <property type="evidence" value="ECO:0007669"/>
    <property type="project" value="InterPro"/>
</dbReference>
<dbReference type="GO" id="GO:0046872">
    <property type="term" value="F:metal ion binding"/>
    <property type="evidence" value="ECO:0007669"/>
    <property type="project" value="UniProtKB-KW"/>
</dbReference>
<dbReference type="GO" id="GO:0008121">
    <property type="term" value="F:ubiquinol-cytochrome-c reductase activity"/>
    <property type="evidence" value="ECO:0007669"/>
    <property type="project" value="InterPro"/>
</dbReference>
<dbReference type="GO" id="GO:0006122">
    <property type="term" value="P:mitochondrial electron transport, ubiquinol to cytochrome c"/>
    <property type="evidence" value="ECO:0007669"/>
    <property type="project" value="TreeGrafter"/>
</dbReference>
<dbReference type="CDD" id="cd00290">
    <property type="entry name" value="cytochrome_b_C"/>
    <property type="match status" value="1"/>
</dbReference>
<dbReference type="CDD" id="cd00284">
    <property type="entry name" value="Cytochrome_b_N"/>
    <property type="match status" value="1"/>
</dbReference>
<dbReference type="FunFam" id="1.20.810.10:FF:000002">
    <property type="entry name" value="Cytochrome b"/>
    <property type="match status" value="1"/>
</dbReference>
<dbReference type="Gene3D" id="1.20.810.10">
    <property type="entry name" value="Cytochrome Bc1 Complex, Chain C"/>
    <property type="match status" value="1"/>
</dbReference>
<dbReference type="InterPro" id="IPR005798">
    <property type="entry name" value="Cyt_b/b6_C"/>
</dbReference>
<dbReference type="InterPro" id="IPR036150">
    <property type="entry name" value="Cyt_b/b6_C_sf"/>
</dbReference>
<dbReference type="InterPro" id="IPR005797">
    <property type="entry name" value="Cyt_b/b6_N"/>
</dbReference>
<dbReference type="InterPro" id="IPR027387">
    <property type="entry name" value="Cytb/b6-like_sf"/>
</dbReference>
<dbReference type="InterPro" id="IPR030689">
    <property type="entry name" value="Cytochrome_b"/>
</dbReference>
<dbReference type="InterPro" id="IPR048260">
    <property type="entry name" value="Cytochrome_b_C_euk/bac"/>
</dbReference>
<dbReference type="InterPro" id="IPR048259">
    <property type="entry name" value="Cytochrome_b_N_euk/bac"/>
</dbReference>
<dbReference type="InterPro" id="IPR016174">
    <property type="entry name" value="Di-haem_cyt_TM"/>
</dbReference>
<dbReference type="PANTHER" id="PTHR19271">
    <property type="entry name" value="CYTOCHROME B"/>
    <property type="match status" value="1"/>
</dbReference>
<dbReference type="PANTHER" id="PTHR19271:SF16">
    <property type="entry name" value="CYTOCHROME B"/>
    <property type="match status" value="1"/>
</dbReference>
<dbReference type="Pfam" id="PF00032">
    <property type="entry name" value="Cytochrom_B_C"/>
    <property type="match status" value="1"/>
</dbReference>
<dbReference type="Pfam" id="PF00033">
    <property type="entry name" value="Cytochrome_B"/>
    <property type="match status" value="1"/>
</dbReference>
<dbReference type="PIRSF" id="PIRSF038885">
    <property type="entry name" value="COB"/>
    <property type="match status" value="1"/>
</dbReference>
<dbReference type="SUPFAM" id="SSF81648">
    <property type="entry name" value="a domain/subunit of cytochrome bc1 complex (Ubiquinol-cytochrome c reductase)"/>
    <property type="match status" value="1"/>
</dbReference>
<dbReference type="SUPFAM" id="SSF81342">
    <property type="entry name" value="Transmembrane di-heme cytochromes"/>
    <property type="match status" value="1"/>
</dbReference>
<dbReference type="PROSITE" id="PS51003">
    <property type="entry name" value="CYTB_CTER"/>
    <property type="match status" value="1"/>
</dbReference>
<dbReference type="PROSITE" id="PS51002">
    <property type="entry name" value="CYTB_NTER"/>
    <property type="match status" value="1"/>
</dbReference>
<sequence length="381" mass="42850">MINLRKTHPLMKIINHSFIDLPAXSNISAWWNFGSSLGVCLMIQISTGLFLAMHYTSDTLTAFSSVAHICRDVNYGWIIRNLHANGASMFFMCLFLHIGRGIYYGSYLYKETWNIGVILLLTVMATAFVGYVLPWGQMSFWGATMVTNLLSAIPYIGTTLAEWIWGGFSVDKATLTRFFAFHFILPFIIMALVIVHLLFLQETGSNNPSGINPDSDKIPFHPYYTIKDALGLMFLLLVLLSLALFSPDLLGDPDNFSPANPLNTPPHIKPEWYFLFAYAILRSIPNKLGGVLALLASILILLVIPFLHTANQRSMMFRPISQTLFWILTANLITLTWIGGQPVEQPSIIIGQLASILYFTLILVLMPLAGMFENYMLEPKW</sequence>
<proteinExistence type="inferred from homology"/>
<reference key="1">
    <citation type="journal article" date="1999" name="Mol. Phylogenet. Evol.">
        <title>Systematic relationships within the dasyurid marsupial tribe Sminthopsini -- a multigene approach.</title>
        <authorList>
            <person name="Blacket M.J."/>
            <person name="Krajewski C."/>
            <person name="Labrinidis A."/>
            <person name="Cambron B."/>
            <person name="Cooper S."/>
            <person name="Westerman M."/>
        </authorList>
    </citation>
    <scope>NUCLEOTIDE SEQUENCE [GENOMIC DNA]</scope>
</reference>
<comment type="function">
    <text evidence="2">Component of the ubiquinol-cytochrome c reductase complex (complex III or cytochrome b-c1 complex) that is part of the mitochondrial respiratory chain. The b-c1 complex mediates electron transfer from ubiquinol to cytochrome c. Contributes to the generation of a proton gradient across the mitochondrial membrane that is then used for ATP synthesis.</text>
</comment>
<comment type="cofactor">
    <cofactor evidence="2">
        <name>heme b</name>
        <dbReference type="ChEBI" id="CHEBI:60344"/>
    </cofactor>
    <text evidence="2">Binds 2 heme b groups non-covalently.</text>
</comment>
<comment type="subunit">
    <text evidence="2">The cytochrome bc1 complex contains 11 subunits: 3 respiratory subunits (MT-CYB, CYC1 and UQCRFS1), 2 core proteins (UQCRC1 and UQCRC2) and 6 low-molecular weight proteins (UQCRH/QCR6, UQCRB/QCR7, UQCRQ/QCR8, UQCR10/QCR9, UQCR11/QCR10 and a cleavage product of UQCRFS1). This cytochrome bc1 complex then forms a dimer.</text>
</comment>
<comment type="subcellular location">
    <subcellularLocation>
        <location evidence="2">Mitochondrion inner membrane</location>
        <topology evidence="2">Multi-pass membrane protein</topology>
    </subcellularLocation>
</comment>
<comment type="miscellaneous">
    <text evidence="1">Heme 1 (or BL or b562) is low-potential and absorbs at about 562 nm, and heme 2 (or BH or b566) is high-potential and absorbs at about 566 nm.</text>
</comment>
<comment type="similarity">
    <text evidence="3 4">Belongs to the cytochrome b family.</text>
</comment>
<comment type="caution">
    <text evidence="2">The full-length protein contains only eight transmembrane helices, not nine as predicted by bioinformatics tools.</text>
</comment>
<geneLocation type="mitochondrion"/>
<gene>
    <name type="primary">MT-CYB</name>
    <name type="synonym">COB</name>
    <name type="synonym">CYTB</name>
    <name type="synonym">MTCYB</name>
</gene>
<protein>
    <recommendedName>
        <fullName>Cytochrome b</fullName>
    </recommendedName>
    <alternativeName>
        <fullName>Complex III subunit 3</fullName>
    </alternativeName>
    <alternativeName>
        <fullName>Complex III subunit III</fullName>
    </alternativeName>
    <alternativeName>
        <fullName>Cytochrome b-c1 complex subunit 3</fullName>
    </alternativeName>
    <alternativeName>
        <fullName>Ubiquinol-cytochrome-c reductase complex cytochrome b subunit</fullName>
    </alternativeName>
</protein>
<accession>Q9XP81</accession>